<dbReference type="EMBL" id="U24159">
    <property type="protein sequence ID" value="AAB09212.1"/>
    <property type="molecule type" value="Genomic_DNA"/>
</dbReference>
<dbReference type="PIR" id="S69533">
    <property type="entry name" value="S69533"/>
</dbReference>
<dbReference type="RefSeq" id="NP_043496.1">
    <property type="nucleotide sequence ID" value="NC_001697.1"/>
</dbReference>
<dbReference type="SMR" id="P51729"/>
<dbReference type="GeneID" id="1261128"/>
<dbReference type="KEGG" id="vg:1261128"/>
<dbReference type="Proteomes" id="UP000001713">
    <property type="component" value="Segment"/>
</dbReference>
<dbReference type="GO" id="GO:0033644">
    <property type="term" value="C:host cell membrane"/>
    <property type="evidence" value="ECO:0007669"/>
    <property type="project" value="UniProtKB-SubCell"/>
</dbReference>
<dbReference type="GO" id="GO:0016020">
    <property type="term" value="C:membrane"/>
    <property type="evidence" value="ECO:0007669"/>
    <property type="project" value="UniProtKB-KW"/>
</dbReference>
<organismHost>
    <name type="scientific">Haemophilus influenzae</name>
    <dbReference type="NCBI Taxonomy" id="727"/>
</organismHost>
<feature type="chain" id="PRO_0000165335" description="Uncharacterized 13.1 kDa protein in lys 3'region">
    <location>
        <begin position="1"/>
        <end position="115"/>
    </location>
</feature>
<feature type="transmembrane region" description="Helical" evidence="1">
    <location>
        <begin position="10"/>
        <end position="28"/>
    </location>
</feature>
<reference key="1">
    <citation type="journal article" date="1984" name="Gene">
        <title>Nucleotide sequence of cloned DNA segments of the Haemophilus influenzae bacteriophage HP1c1.</title>
        <authorList>
            <person name="Benjamin R.C."/>
            <person name="Fitzmaurice W.P."/>
            <person name="Huang P.C."/>
            <person name="Scocca J.J."/>
        </authorList>
    </citation>
    <scope>NUCLEOTIDE SEQUENCE [GENOMIC DNA]</scope>
</reference>
<reference key="2">
    <citation type="journal article" date="1996" name="Nucleic Acids Res.">
        <title>The complete nucleotide sequence of bacteriophage HP1 DNA.</title>
        <authorList>
            <person name="Esposito D."/>
            <person name="Fitzmaurice W.P."/>
            <person name="Benjamin R.C."/>
            <person name="Goodman S.D."/>
            <person name="Waldman A.S."/>
            <person name="Scocca J.J."/>
        </authorList>
    </citation>
    <scope>NUCLEOTIDE SEQUENCE [LARGE SCALE GENOMIC DNA]</scope>
</reference>
<evidence type="ECO:0000255" key="1"/>
<evidence type="ECO:0000305" key="2"/>
<comment type="subcellular location">
    <subcellularLocation>
        <location evidence="2">Host membrane</location>
        <topology evidence="2">Single-pass membrane protein</topology>
    </subcellularLocation>
</comment>
<name>YO25_BPHC1</name>
<keyword id="KW-1043">Host membrane</keyword>
<keyword id="KW-0472">Membrane</keyword>
<keyword id="KW-1185">Reference proteome</keyword>
<keyword id="KW-0812">Transmembrane</keyword>
<keyword id="KW-1133">Transmembrane helix</keyword>
<accession>P51729</accession>
<sequence>MFGGIMEFKALFIGVFLIVFLGCIGSTLHYKKQAETTALLLKQSEQTIKQNKVMLQRYETQNAKLTSQLNQANKKAEQRSQQLKDVLNNAENKNWTYGRVPNDVAGVLNHRTQAK</sequence>
<protein>
    <recommendedName>
        <fullName>Uncharacterized 13.1 kDa protein in lys 3'region</fullName>
    </recommendedName>
    <alternativeName>
        <fullName>ORF25</fullName>
    </alternativeName>
</protein>
<organism>
    <name type="scientific">Haemophilus phage HP1 (strain HP1c1)</name>
    <name type="common">Bacteriophage HP1</name>
    <dbReference type="NCBI Taxonomy" id="1289570"/>
    <lineage>
        <taxon>Viruses</taxon>
        <taxon>Duplodnaviria</taxon>
        <taxon>Heunggongvirae</taxon>
        <taxon>Uroviricota</taxon>
        <taxon>Caudoviricetes</taxon>
        <taxon>Peduoviridae</taxon>
        <taxon>Hpunavirus</taxon>
        <taxon>Haemophilus phage HP1</taxon>
    </lineage>
</organism>
<proteinExistence type="predicted"/>